<evidence type="ECO:0000255" key="1">
    <source>
        <dbReference type="HAMAP-Rule" id="MF_00523"/>
    </source>
</evidence>
<proteinExistence type="inferred from homology"/>
<feature type="chain" id="PRO_0000264437" description="UDP-3-O-acylglucosamine N-acyltransferase">
    <location>
        <begin position="1"/>
        <end position="341"/>
    </location>
</feature>
<feature type="active site" description="Proton acceptor" evidence="1">
    <location>
        <position position="239"/>
    </location>
</feature>
<accession>Q0HT72</accession>
<dbReference type="EC" id="2.3.1.191" evidence="1"/>
<dbReference type="EMBL" id="CP000444">
    <property type="protein sequence ID" value="ABI43683.1"/>
    <property type="molecule type" value="Genomic_DNA"/>
</dbReference>
<dbReference type="SMR" id="Q0HT72"/>
<dbReference type="KEGG" id="shm:Shewmr7_2698"/>
<dbReference type="HOGENOM" id="CLU_049865_0_1_6"/>
<dbReference type="UniPathway" id="UPA00973"/>
<dbReference type="GO" id="GO:0016020">
    <property type="term" value="C:membrane"/>
    <property type="evidence" value="ECO:0007669"/>
    <property type="project" value="GOC"/>
</dbReference>
<dbReference type="GO" id="GO:0016410">
    <property type="term" value="F:N-acyltransferase activity"/>
    <property type="evidence" value="ECO:0007669"/>
    <property type="project" value="InterPro"/>
</dbReference>
<dbReference type="GO" id="GO:0009245">
    <property type="term" value="P:lipid A biosynthetic process"/>
    <property type="evidence" value="ECO:0007669"/>
    <property type="project" value="UniProtKB-UniRule"/>
</dbReference>
<dbReference type="CDD" id="cd03352">
    <property type="entry name" value="LbH_LpxD"/>
    <property type="match status" value="1"/>
</dbReference>
<dbReference type="Gene3D" id="1.20.5.170">
    <property type="match status" value="1"/>
</dbReference>
<dbReference type="Gene3D" id="2.160.10.10">
    <property type="entry name" value="Hexapeptide repeat proteins"/>
    <property type="match status" value="1"/>
</dbReference>
<dbReference type="Gene3D" id="3.40.1390.10">
    <property type="entry name" value="MurE/MurF, N-terminal domain"/>
    <property type="match status" value="1"/>
</dbReference>
<dbReference type="HAMAP" id="MF_00523">
    <property type="entry name" value="LpxD"/>
    <property type="match status" value="1"/>
</dbReference>
<dbReference type="InterPro" id="IPR001451">
    <property type="entry name" value="Hexapep"/>
</dbReference>
<dbReference type="InterPro" id="IPR007691">
    <property type="entry name" value="LpxD"/>
</dbReference>
<dbReference type="InterPro" id="IPR011004">
    <property type="entry name" value="Trimer_LpxA-like_sf"/>
</dbReference>
<dbReference type="InterPro" id="IPR020573">
    <property type="entry name" value="UDP_GlcNAc_AcTrfase_non-rep"/>
</dbReference>
<dbReference type="NCBIfam" id="TIGR01853">
    <property type="entry name" value="lipid_A_lpxD"/>
    <property type="match status" value="1"/>
</dbReference>
<dbReference type="NCBIfam" id="NF002060">
    <property type="entry name" value="PRK00892.1"/>
    <property type="match status" value="1"/>
</dbReference>
<dbReference type="PANTHER" id="PTHR43378">
    <property type="entry name" value="UDP-3-O-ACYLGLUCOSAMINE N-ACYLTRANSFERASE"/>
    <property type="match status" value="1"/>
</dbReference>
<dbReference type="PANTHER" id="PTHR43378:SF2">
    <property type="entry name" value="UDP-3-O-ACYLGLUCOSAMINE N-ACYLTRANSFERASE 1, MITOCHONDRIAL-RELATED"/>
    <property type="match status" value="1"/>
</dbReference>
<dbReference type="Pfam" id="PF00132">
    <property type="entry name" value="Hexapep"/>
    <property type="match status" value="1"/>
</dbReference>
<dbReference type="Pfam" id="PF14602">
    <property type="entry name" value="Hexapep_2"/>
    <property type="match status" value="1"/>
</dbReference>
<dbReference type="Pfam" id="PF04613">
    <property type="entry name" value="LpxD"/>
    <property type="match status" value="1"/>
</dbReference>
<dbReference type="SUPFAM" id="SSF51161">
    <property type="entry name" value="Trimeric LpxA-like enzymes"/>
    <property type="match status" value="1"/>
</dbReference>
<dbReference type="PROSITE" id="PS00101">
    <property type="entry name" value="HEXAPEP_TRANSFERASES"/>
    <property type="match status" value="1"/>
</dbReference>
<reference key="1">
    <citation type="submission" date="2006-08" db="EMBL/GenBank/DDBJ databases">
        <title>Complete sequence of chromosome 1 of Shewanella sp. MR-7.</title>
        <authorList>
            <person name="Copeland A."/>
            <person name="Lucas S."/>
            <person name="Lapidus A."/>
            <person name="Barry K."/>
            <person name="Detter J.C."/>
            <person name="Glavina del Rio T."/>
            <person name="Hammon N."/>
            <person name="Israni S."/>
            <person name="Dalin E."/>
            <person name="Tice H."/>
            <person name="Pitluck S."/>
            <person name="Kiss H."/>
            <person name="Brettin T."/>
            <person name="Bruce D."/>
            <person name="Han C."/>
            <person name="Tapia R."/>
            <person name="Gilna P."/>
            <person name="Schmutz J."/>
            <person name="Larimer F."/>
            <person name="Land M."/>
            <person name="Hauser L."/>
            <person name="Kyrpides N."/>
            <person name="Mikhailova N."/>
            <person name="Nealson K."/>
            <person name="Konstantinidis K."/>
            <person name="Klappenbach J."/>
            <person name="Tiedje J."/>
            <person name="Richardson P."/>
        </authorList>
    </citation>
    <scope>NUCLEOTIDE SEQUENCE [LARGE SCALE GENOMIC DNA]</scope>
    <source>
        <strain>MR-7</strain>
    </source>
</reference>
<keyword id="KW-0012">Acyltransferase</keyword>
<keyword id="KW-0441">Lipid A biosynthesis</keyword>
<keyword id="KW-0444">Lipid biosynthesis</keyword>
<keyword id="KW-0443">Lipid metabolism</keyword>
<keyword id="KW-0677">Repeat</keyword>
<keyword id="KW-0808">Transferase</keyword>
<comment type="function">
    <text evidence="1">Catalyzes the N-acylation of UDP-3-O-acylglucosamine using 3-hydroxyacyl-ACP as the acyl donor. Is involved in the biosynthesis of lipid A, a phosphorylated glycolipid that anchors the lipopolysaccharide to the outer membrane of the cell.</text>
</comment>
<comment type="catalytic activity">
    <reaction evidence="1">
        <text>a UDP-3-O-[(3R)-3-hydroxyacyl]-alpha-D-glucosamine + a (3R)-hydroxyacyl-[ACP] = a UDP-2-N,3-O-bis[(3R)-3-hydroxyacyl]-alpha-D-glucosamine + holo-[ACP] + H(+)</text>
        <dbReference type="Rhea" id="RHEA:53836"/>
        <dbReference type="Rhea" id="RHEA-COMP:9685"/>
        <dbReference type="Rhea" id="RHEA-COMP:9945"/>
        <dbReference type="ChEBI" id="CHEBI:15378"/>
        <dbReference type="ChEBI" id="CHEBI:64479"/>
        <dbReference type="ChEBI" id="CHEBI:78827"/>
        <dbReference type="ChEBI" id="CHEBI:137740"/>
        <dbReference type="ChEBI" id="CHEBI:137748"/>
        <dbReference type="EC" id="2.3.1.191"/>
    </reaction>
</comment>
<comment type="pathway">
    <text evidence="1">Bacterial outer membrane biogenesis; LPS lipid A biosynthesis.</text>
</comment>
<comment type="subunit">
    <text evidence="1">Homotrimer.</text>
</comment>
<comment type="similarity">
    <text evidence="1">Belongs to the transferase hexapeptide repeat family. LpxD subfamily.</text>
</comment>
<organism>
    <name type="scientific">Shewanella sp. (strain MR-7)</name>
    <dbReference type="NCBI Taxonomy" id="60481"/>
    <lineage>
        <taxon>Bacteria</taxon>
        <taxon>Pseudomonadati</taxon>
        <taxon>Pseudomonadota</taxon>
        <taxon>Gammaproteobacteria</taxon>
        <taxon>Alteromonadales</taxon>
        <taxon>Shewanellaceae</taxon>
        <taxon>Shewanella</taxon>
    </lineage>
</organism>
<gene>
    <name evidence="1" type="primary">lpxD</name>
    <name type="ordered locus">Shewmr7_2698</name>
</gene>
<protein>
    <recommendedName>
        <fullName evidence="1">UDP-3-O-acylglucosamine N-acyltransferase</fullName>
        <ecNumber evidence="1">2.3.1.191</ecNumber>
    </recommendedName>
</protein>
<sequence>MKSVTLKELSLLLDGVVQGDETLVINSVATLEHATAGQISFLANSKYRAQLESTQASAVLLSAKDAQDYSGTALVVKDPYVGFARVAQLLDTTPKAAIGIHPSAQIDPSALLGEGVAIGANAVIGANVILGENVQIGAGTVIGQDCIIGSNTRLWANVTLYHNVHLGQDCIIHSGAIIGSDGFGYANERGQWIKIPQTGGVRIGDRVEIGASSTIDRGALGHTEIHNGVIIDNQVQVAHNDIIGENTAIAGSTTLAGSVTIGKHCIIGGNCAIAGHLTIADGVHLSGATNVTGNMREPGLYSSATVAMENKVWRKNTVRFRQLDELFQRVKTLEKNSNTPE</sequence>
<name>LPXD_SHESR</name>